<name>PNP_BORGP</name>
<accession>Q65ZW8</accession>
<feature type="chain" id="PRO_0000329541" description="Polyribonucleotide nucleotidyltransferase">
    <location>
        <begin position="1"/>
        <end position="721"/>
    </location>
</feature>
<feature type="domain" description="KH" evidence="1">
    <location>
        <begin position="553"/>
        <end position="612"/>
    </location>
</feature>
<feature type="domain" description="S1 motif" evidence="1">
    <location>
        <begin position="622"/>
        <end position="716"/>
    </location>
</feature>
<feature type="binding site" evidence="1">
    <location>
        <position position="486"/>
    </location>
    <ligand>
        <name>Mg(2+)</name>
        <dbReference type="ChEBI" id="CHEBI:18420"/>
    </ligand>
</feature>
<feature type="binding site" evidence="1">
    <location>
        <position position="492"/>
    </location>
    <ligand>
        <name>Mg(2+)</name>
        <dbReference type="ChEBI" id="CHEBI:18420"/>
    </ligand>
</feature>
<proteinExistence type="inferred from homology"/>
<reference key="1">
    <citation type="journal article" date="2004" name="Nucleic Acids Res.">
        <title>Comparative analysis of the Borrelia garinii genome.</title>
        <authorList>
            <person name="Gloeckner G."/>
            <person name="Lehmann R."/>
            <person name="Romualdi A."/>
            <person name="Pradella S."/>
            <person name="Schulte-Spechtel U."/>
            <person name="Schilhabel M."/>
            <person name="Wilske B."/>
            <person name="Suehnel J."/>
            <person name="Platzer M."/>
        </authorList>
    </citation>
    <scope>NUCLEOTIDE SEQUENCE [LARGE SCALE GENOMIC DNA]</scope>
    <source>
        <strain>ATCC BAA-2496 / DSM 23469 / PBi</strain>
    </source>
</reference>
<organism>
    <name type="scientific">Borrelia garinii subsp. bavariensis (strain ATCC BAA-2496 / DSM 23469 / PBi)</name>
    <name type="common">Borreliella bavariensis</name>
    <dbReference type="NCBI Taxonomy" id="290434"/>
    <lineage>
        <taxon>Bacteria</taxon>
        <taxon>Pseudomonadati</taxon>
        <taxon>Spirochaetota</taxon>
        <taxon>Spirochaetia</taxon>
        <taxon>Spirochaetales</taxon>
        <taxon>Borreliaceae</taxon>
        <taxon>Borreliella</taxon>
    </lineage>
</organism>
<evidence type="ECO:0000255" key="1">
    <source>
        <dbReference type="HAMAP-Rule" id="MF_01595"/>
    </source>
</evidence>
<evidence type="ECO:0000305" key="2"/>
<comment type="function">
    <text evidence="1">Involved in mRNA degradation. Catalyzes the phosphorolysis of single-stranded polyribonucleotides processively in the 3'- to 5'-direction.</text>
</comment>
<comment type="catalytic activity">
    <reaction evidence="1">
        <text>RNA(n+1) + phosphate = RNA(n) + a ribonucleoside 5'-diphosphate</text>
        <dbReference type="Rhea" id="RHEA:22096"/>
        <dbReference type="Rhea" id="RHEA-COMP:14527"/>
        <dbReference type="Rhea" id="RHEA-COMP:17342"/>
        <dbReference type="ChEBI" id="CHEBI:43474"/>
        <dbReference type="ChEBI" id="CHEBI:57930"/>
        <dbReference type="ChEBI" id="CHEBI:140395"/>
        <dbReference type="EC" id="2.7.7.8"/>
    </reaction>
</comment>
<comment type="cofactor">
    <cofactor evidence="1">
        <name>Mg(2+)</name>
        <dbReference type="ChEBI" id="CHEBI:18420"/>
    </cofactor>
</comment>
<comment type="subcellular location">
    <subcellularLocation>
        <location evidence="1">Cytoplasm</location>
    </subcellularLocation>
</comment>
<comment type="similarity">
    <text evidence="1">Belongs to the polyribonucleotide nucleotidyltransferase family.</text>
</comment>
<comment type="sequence caution" evidence="2">
    <conflict type="erroneous initiation">
        <sequence resource="EMBL-CDS" id="AAU07653"/>
    </conflict>
</comment>
<sequence length="721" mass="80286">MRKILKLKIGRDELVFETGFMAKQANGSVLATYGGSSVLATVCCSNNVREDLDFVPLSVEYNEKYYAAGKIPGGFIKREGKPKDKEILVSRLIDRPMRPLFDKRFGREIQVIPTTLATDQLNPPDIVGMNAAFTAVFLSDIPFNGPIAAVRMVYLNGKFIVNPSFEEIHDSDLDIVVAGSLNGITMVEGGANEVSEDILLSAIDGAHEYIKQICNAQKEFLDIVGEKEKLPLAFEEKIFEFKEELKDFIYTDLKEACFVKGKLNRDKAITLLRNKSYEHFSSLEKLTDSNESLFYKAFDDFEREIVRNSILNDKIRTDGRTPNEIRDIIAEVDILSRTHGSALFTRGETQALAVTTLGTSIDEQIMDDIDGDKRLNFMLHYNFPPFSVGETGRLMTGRREIGHGHLAQRALESMVPGKNDFPYTIRVVSEILESNGSSSMATVCAGSMSLMSAGVPVKRQVAGIAMGLISEGDKYVVLSDILGEEDHLGDMDFKVAGTKNGITGFQMDIKIENVTKHLMRDALEQARIGRMHILSVMDTVISDSRVGISKYAPKIVQLQIDIDKISLVIGSTGKTVKAITDEFEVKVQIEQNGKIILFGDDDFKMQKAKERIESIVREPKVGEIYEGIVKKINSFGAFIELTPTKEGFLSTRLKSRDNKYGSGRFGTGNRYPRFGGGDNIRGNVGLVRPPKLEEGQQIKVKIIDIDKFGKIDLEVVRDKDY</sequence>
<dbReference type="EC" id="2.7.7.8" evidence="1"/>
<dbReference type="EMBL" id="CP000013">
    <property type="protein sequence ID" value="AAU07653.1"/>
    <property type="status" value="ALT_INIT"/>
    <property type="molecule type" value="Genomic_DNA"/>
</dbReference>
<dbReference type="RefSeq" id="WP_044007938.1">
    <property type="nucleotide sequence ID" value="NZ_CP028872.1"/>
</dbReference>
<dbReference type="SMR" id="Q65ZW8"/>
<dbReference type="GeneID" id="45161605"/>
<dbReference type="KEGG" id="bga:BG0831"/>
<dbReference type="eggNOG" id="COG1185">
    <property type="taxonomic scope" value="Bacteria"/>
</dbReference>
<dbReference type="HOGENOM" id="CLU_004217_2_2_12"/>
<dbReference type="OrthoDB" id="9804305at2"/>
<dbReference type="Proteomes" id="UP000002276">
    <property type="component" value="Chromosome"/>
</dbReference>
<dbReference type="GO" id="GO:0005829">
    <property type="term" value="C:cytosol"/>
    <property type="evidence" value="ECO:0007669"/>
    <property type="project" value="TreeGrafter"/>
</dbReference>
<dbReference type="GO" id="GO:0000175">
    <property type="term" value="F:3'-5'-RNA exonuclease activity"/>
    <property type="evidence" value="ECO:0007669"/>
    <property type="project" value="TreeGrafter"/>
</dbReference>
<dbReference type="GO" id="GO:0000287">
    <property type="term" value="F:magnesium ion binding"/>
    <property type="evidence" value="ECO:0007669"/>
    <property type="project" value="UniProtKB-UniRule"/>
</dbReference>
<dbReference type="GO" id="GO:0004654">
    <property type="term" value="F:polyribonucleotide nucleotidyltransferase activity"/>
    <property type="evidence" value="ECO:0007669"/>
    <property type="project" value="UniProtKB-UniRule"/>
</dbReference>
<dbReference type="GO" id="GO:0003723">
    <property type="term" value="F:RNA binding"/>
    <property type="evidence" value="ECO:0007669"/>
    <property type="project" value="UniProtKB-UniRule"/>
</dbReference>
<dbReference type="GO" id="GO:0006402">
    <property type="term" value="P:mRNA catabolic process"/>
    <property type="evidence" value="ECO:0007669"/>
    <property type="project" value="UniProtKB-UniRule"/>
</dbReference>
<dbReference type="GO" id="GO:0006396">
    <property type="term" value="P:RNA processing"/>
    <property type="evidence" value="ECO:0007669"/>
    <property type="project" value="InterPro"/>
</dbReference>
<dbReference type="CDD" id="cd02393">
    <property type="entry name" value="KH-I_PNPase"/>
    <property type="match status" value="1"/>
</dbReference>
<dbReference type="CDD" id="cd11363">
    <property type="entry name" value="RNase_PH_PNPase_1"/>
    <property type="match status" value="1"/>
</dbReference>
<dbReference type="CDD" id="cd11364">
    <property type="entry name" value="RNase_PH_PNPase_2"/>
    <property type="match status" value="1"/>
</dbReference>
<dbReference type="FunFam" id="3.30.1370.10:FF:000001">
    <property type="entry name" value="Polyribonucleotide nucleotidyltransferase"/>
    <property type="match status" value="1"/>
</dbReference>
<dbReference type="FunFam" id="3.30.230.70:FF:000001">
    <property type="entry name" value="Polyribonucleotide nucleotidyltransferase"/>
    <property type="match status" value="1"/>
</dbReference>
<dbReference type="FunFam" id="3.30.230.70:FF:000002">
    <property type="entry name" value="Polyribonucleotide nucleotidyltransferase"/>
    <property type="match status" value="1"/>
</dbReference>
<dbReference type="Gene3D" id="3.30.230.70">
    <property type="entry name" value="GHMP Kinase, N-terminal domain"/>
    <property type="match status" value="2"/>
</dbReference>
<dbReference type="Gene3D" id="3.30.1370.10">
    <property type="entry name" value="K Homology domain, type 1"/>
    <property type="match status" value="1"/>
</dbReference>
<dbReference type="Gene3D" id="2.40.50.140">
    <property type="entry name" value="Nucleic acid-binding proteins"/>
    <property type="match status" value="1"/>
</dbReference>
<dbReference type="HAMAP" id="MF_01595">
    <property type="entry name" value="PNPase"/>
    <property type="match status" value="1"/>
</dbReference>
<dbReference type="InterPro" id="IPR001247">
    <property type="entry name" value="ExoRNase_PH_dom1"/>
</dbReference>
<dbReference type="InterPro" id="IPR015847">
    <property type="entry name" value="ExoRNase_PH_dom2"/>
</dbReference>
<dbReference type="InterPro" id="IPR036345">
    <property type="entry name" value="ExoRNase_PH_dom2_sf"/>
</dbReference>
<dbReference type="InterPro" id="IPR004087">
    <property type="entry name" value="KH_dom"/>
</dbReference>
<dbReference type="InterPro" id="IPR004088">
    <property type="entry name" value="KH_dom_type_1"/>
</dbReference>
<dbReference type="InterPro" id="IPR036612">
    <property type="entry name" value="KH_dom_type_1_sf"/>
</dbReference>
<dbReference type="InterPro" id="IPR012340">
    <property type="entry name" value="NA-bd_OB-fold"/>
</dbReference>
<dbReference type="InterPro" id="IPR012162">
    <property type="entry name" value="PNPase"/>
</dbReference>
<dbReference type="InterPro" id="IPR027408">
    <property type="entry name" value="PNPase/RNase_PH_dom_sf"/>
</dbReference>
<dbReference type="InterPro" id="IPR015848">
    <property type="entry name" value="PNPase_PH_RNA-bd_bac/org-type"/>
</dbReference>
<dbReference type="InterPro" id="IPR020568">
    <property type="entry name" value="Ribosomal_Su5_D2-typ_SF"/>
</dbReference>
<dbReference type="InterPro" id="IPR003029">
    <property type="entry name" value="S1_domain"/>
</dbReference>
<dbReference type="NCBIfam" id="TIGR03591">
    <property type="entry name" value="polynuc_phos"/>
    <property type="match status" value="1"/>
</dbReference>
<dbReference type="NCBIfam" id="NF008805">
    <property type="entry name" value="PRK11824.1"/>
    <property type="match status" value="1"/>
</dbReference>
<dbReference type="PANTHER" id="PTHR11252">
    <property type="entry name" value="POLYRIBONUCLEOTIDE NUCLEOTIDYLTRANSFERASE"/>
    <property type="match status" value="1"/>
</dbReference>
<dbReference type="PANTHER" id="PTHR11252:SF0">
    <property type="entry name" value="POLYRIBONUCLEOTIDE NUCLEOTIDYLTRANSFERASE 1, MITOCHONDRIAL"/>
    <property type="match status" value="1"/>
</dbReference>
<dbReference type="Pfam" id="PF00013">
    <property type="entry name" value="KH_1"/>
    <property type="match status" value="1"/>
</dbReference>
<dbReference type="Pfam" id="PF03726">
    <property type="entry name" value="PNPase"/>
    <property type="match status" value="1"/>
</dbReference>
<dbReference type="Pfam" id="PF01138">
    <property type="entry name" value="RNase_PH"/>
    <property type="match status" value="2"/>
</dbReference>
<dbReference type="Pfam" id="PF03725">
    <property type="entry name" value="RNase_PH_C"/>
    <property type="match status" value="2"/>
</dbReference>
<dbReference type="Pfam" id="PF00575">
    <property type="entry name" value="S1"/>
    <property type="match status" value="1"/>
</dbReference>
<dbReference type="PIRSF" id="PIRSF005499">
    <property type="entry name" value="PNPase"/>
    <property type="match status" value="1"/>
</dbReference>
<dbReference type="SMART" id="SM00322">
    <property type="entry name" value="KH"/>
    <property type="match status" value="1"/>
</dbReference>
<dbReference type="SMART" id="SM00316">
    <property type="entry name" value="S1"/>
    <property type="match status" value="1"/>
</dbReference>
<dbReference type="SUPFAM" id="SSF54791">
    <property type="entry name" value="Eukaryotic type KH-domain (KH-domain type I)"/>
    <property type="match status" value="1"/>
</dbReference>
<dbReference type="SUPFAM" id="SSF50249">
    <property type="entry name" value="Nucleic acid-binding proteins"/>
    <property type="match status" value="1"/>
</dbReference>
<dbReference type="SUPFAM" id="SSF55666">
    <property type="entry name" value="Ribonuclease PH domain 2-like"/>
    <property type="match status" value="2"/>
</dbReference>
<dbReference type="SUPFAM" id="SSF54211">
    <property type="entry name" value="Ribosomal protein S5 domain 2-like"/>
    <property type="match status" value="2"/>
</dbReference>
<dbReference type="PROSITE" id="PS50084">
    <property type="entry name" value="KH_TYPE_1"/>
    <property type="match status" value="1"/>
</dbReference>
<dbReference type="PROSITE" id="PS50126">
    <property type="entry name" value="S1"/>
    <property type="match status" value="1"/>
</dbReference>
<keyword id="KW-0963">Cytoplasm</keyword>
<keyword id="KW-0460">Magnesium</keyword>
<keyword id="KW-0479">Metal-binding</keyword>
<keyword id="KW-0548">Nucleotidyltransferase</keyword>
<keyword id="KW-0694">RNA-binding</keyword>
<keyword id="KW-0808">Transferase</keyword>
<gene>
    <name evidence="1" type="primary">pnp</name>
    <name type="ordered locus">BG0831</name>
</gene>
<protein>
    <recommendedName>
        <fullName evidence="1">Polyribonucleotide nucleotidyltransferase</fullName>
        <ecNumber evidence="1">2.7.7.8</ecNumber>
    </recommendedName>
    <alternativeName>
        <fullName evidence="1">Polynucleotide phosphorylase</fullName>
        <shortName evidence="1">PNPase</shortName>
    </alternativeName>
</protein>